<dbReference type="EC" id="2.4.2.1" evidence="1"/>
<dbReference type="EC" id="2.4.2.2" evidence="1"/>
<dbReference type="EMBL" id="CP001113">
    <property type="protein sequence ID" value="ACF63524.1"/>
    <property type="molecule type" value="Genomic_DNA"/>
</dbReference>
<dbReference type="RefSeq" id="WP_000941945.1">
    <property type="nucleotide sequence ID" value="NZ_CCMR01000003.1"/>
</dbReference>
<dbReference type="SMR" id="B4SW31"/>
<dbReference type="KEGG" id="see:SNSL254_A0434"/>
<dbReference type="HOGENOM" id="CLU_157874_0_0_6"/>
<dbReference type="Proteomes" id="UP000008824">
    <property type="component" value="Chromosome"/>
</dbReference>
<dbReference type="GO" id="GO:0005829">
    <property type="term" value="C:cytosol"/>
    <property type="evidence" value="ECO:0007669"/>
    <property type="project" value="TreeGrafter"/>
</dbReference>
<dbReference type="GO" id="GO:0047975">
    <property type="term" value="F:guanosine phosphorylase activity"/>
    <property type="evidence" value="ECO:0007669"/>
    <property type="project" value="UniProtKB-EC"/>
</dbReference>
<dbReference type="GO" id="GO:0004731">
    <property type="term" value="F:purine-nucleoside phosphorylase activity"/>
    <property type="evidence" value="ECO:0007669"/>
    <property type="project" value="UniProtKB-UniRule"/>
</dbReference>
<dbReference type="GO" id="GO:0009032">
    <property type="term" value="F:thymidine phosphorylase activity"/>
    <property type="evidence" value="ECO:0007669"/>
    <property type="project" value="UniProtKB-EC"/>
</dbReference>
<dbReference type="GO" id="GO:0004850">
    <property type="term" value="F:uridine phosphorylase activity"/>
    <property type="evidence" value="ECO:0007669"/>
    <property type="project" value="UniProtKB-EC"/>
</dbReference>
<dbReference type="CDD" id="cd20296">
    <property type="entry name" value="cupin_PpnP-like"/>
    <property type="match status" value="1"/>
</dbReference>
<dbReference type="FunFam" id="2.60.120.10:FF:000016">
    <property type="entry name" value="Pyrimidine/purine nucleoside phosphorylase"/>
    <property type="match status" value="1"/>
</dbReference>
<dbReference type="Gene3D" id="2.60.120.10">
    <property type="entry name" value="Jelly Rolls"/>
    <property type="match status" value="1"/>
</dbReference>
<dbReference type="HAMAP" id="MF_01537">
    <property type="entry name" value="Nucleos_phosphorylase_PpnP"/>
    <property type="match status" value="1"/>
</dbReference>
<dbReference type="InterPro" id="IPR009664">
    <property type="entry name" value="Ppnp"/>
</dbReference>
<dbReference type="InterPro" id="IPR014710">
    <property type="entry name" value="RmlC-like_jellyroll"/>
</dbReference>
<dbReference type="InterPro" id="IPR011051">
    <property type="entry name" value="RmlC_Cupin_sf"/>
</dbReference>
<dbReference type="NCBIfam" id="NF007875">
    <property type="entry name" value="PRK10579.1"/>
    <property type="match status" value="1"/>
</dbReference>
<dbReference type="PANTHER" id="PTHR36540">
    <property type="entry name" value="PYRIMIDINE/PURINE NUCLEOSIDE PHOSPHORYLASE"/>
    <property type="match status" value="1"/>
</dbReference>
<dbReference type="PANTHER" id="PTHR36540:SF1">
    <property type="entry name" value="PYRIMIDINE_PURINE NUCLEOSIDE PHOSPHORYLASE"/>
    <property type="match status" value="1"/>
</dbReference>
<dbReference type="Pfam" id="PF06865">
    <property type="entry name" value="Ppnp"/>
    <property type="match status" value="1"/>
</dbReference>
<dbReference type="SUPFAM" id="SSF51182">
    <property type="entry name" value="RmlC-like cupins"/>
    <property type="match status" value="1"/>
</dbReference>
<comment type="function">
    <text evidence="1">Catalyzes the phosphorolysis of diverse nucleosides, yielding D-ribose 1-phosphate and the respective free bases. Can use uridine, adenosine, guanosine, cytidine, thymidine, inosine and xanthosine as substrates. Also catalyzes the reverse reactions.</text>
</comment>
<comment type="catalytic activity">
    <reaction evidence="1">
        <text>a purine D-ribonucleoside + phosphate = a purine nucleobase + alpha-D-ribose 1-phosphate</text>
        <dbReference type="Rhea" id="RHEA:19805"/>
        <dbReference type="ChEBI" id="CHEBI:26386"/>
        <dbReference type="ChEBI" id="CHEBI:43474"/>
        <dbReference type="ChEBI" id="CHEBI:57720"/>
        <dbReference type="ChEBI" id="CHEBI:142355"/>
        <dbReference type="EC" id="2.4.2.1"/>
    </reaction>
</comment>
<comment type="catalytic activity">
    <reaction evidence="1">
        <text>adenosine + phosphate = alpha-D-ribose 1-phosphate + adenine</text>
        <dbReference type="Rhea" id="RHEA:27642"/>
        <dbReference type="ChEBI" id="CHEBI:16335"/>
        <dbReference type="ChEBI" id="CHEBI:16708"/>
        <dbReference type="ChEBI" id="CHEBI:43474"/>
        <dbReference type="ChEBI" id="CHEBI:57720"/>
        <dbReference type="EC" id="2.4.2.1"/>
    </reaction>
</comment>
<comment type="catalytic activity">
    <reaction evidence="1">
        <text>cytidine + phosphate = cytosine + alpha-D-ribose 1-phosphate</text>
        <dbReference type="Rhea" id="RHEA:52540"/>
        <dbReference type="ChEBI" id="CHEBI:16040"/>
        <dbReference type="ChEBI" id="CHEBI:17562"/>
        <dbReference type="ChEBI" id="CHEBI:43474"/>
        <dbReference type="ChEBI" id="CHEBI:57720"/>
        <dbReference type="EC" id="2.4.2.2"/>
    </reaction>
</comment>
<comment type="catalytic activity">
    <reaction evidence="1">
        <text>guanosine + phosphate = alpha-D-ribose 1-phosphate + guanine</text>
        <dbReference type="Rhea" id="RHEA:13233"/>
        <dbReference type="ChEBI" id="CHEBI:16235"/>
        <dbReference type="ChEBI" id="CHEBI:16750"/>
        <dbReference type="ChEBI" id="CHEBI:43474"/>
        <dbReference type="ChEBI" id="CHEBI:57720"/>
        <dbReference type="EC" id="2.4.2.1"/>
    </reaction>
</comment>
<comment type="catalytic activity">
    <reaction evidence="1">
        <text>inosine + phosphate = alpha-D-ribose 1-phosphate + hypoxanthine</text>
        <dbReference type="Rhea" id="RHEA:27646"/>
        <dbReference type="ChEBI" id="CHEBI:17368"/>
        <dbReference type="ChEBI" id="CHEBI:17596"/>
        <dbReference type="ChEBI" id="CHEBI:43474"/>
        <dbReference type="ChEBI" id="CHEBI:57720"/>
        <dbReference type="EC" id="2.4.2.1"/>
    </reaction>
</comment>
<comment type="catalytic activity">
    <reaction evidence="1">
        <text>thymidine + phosphate = 2-deoxy-alpha-D-ribose 1-phosphate + thymine</text>
        <dbReference type="Rhea" id="RHEA:16037"/>
        <dbReference type="ChEBI" id="CHEBI:17748"/>
        <dbReference type="ChEBI" id="CHEBI:17821"/>
        <dbReference type="ChEBI" id="CHEBI:43474"/>
        <dbReference type="ChEBI" id="CHEBI:57259"/>
        <dbReference type="EC" id="2.4.2.2"/>
    </reaction>
</comment>
<comment type="catalytic activity">
    <reaction evidence="1">
        <text>uridine + phosphate = alpha-D-ribose 1-phosphate + uracil</text>
        <dbReference type="Rhea" id="RHEA:24388"/>
        <dbReference type="ChEBI" id="CHEBI:16704"/>
        <dbReference type="ChEBI" id="CHEBI:17568"/>
        <dbReference type="ChEBI" id="CHEBI:43474"/>
        <dbReference type="ChEBI" id="CHEBI:57720"/>
        <dbReference type="EC" id="2.4.2.2"/>
    </reaction>
</comment>
<comment type="catalytic activity">
    <reaction evidence="1">
        <text>xanthosine + phosphate = alpha-D-ribose 1-phosphate + xanthine</text>
        <dbReference type="Rhea" id="RHEA:27638"/>
        <dbReference type="ChEBI" id="CHEBI:17712"/>
        <dbReference type="ChEBI" id="CHEBI:18107"/>
        <dbReference type="ChEBI" id="CHEBI:43474"/>
        <dbReference type="ChEBI" id="CHEBI:57720"/>
        <dbReference type="EC" id="2.4.2.1"/>
    </reaction>
</comment>
<comment type="similarity">
    <text evidence="1">Belongs to the nucleoside phosphorylase PpnP family.</text>
</comment>
<feature type="chain" id="PRO_1000198678" description="Pyrimidine/purine nucleoside phosphorylase">
    <location>
        <begin position="1"/>
        <end position="94"/>
    </location>
</feature>
<evidence type="ECO:0000255" key="1">
    <source>
        <dbReference type="HAMAP-Rule" id="MF_01537"/>
    </source>
</evidence>
<protein>
    <recommendedName>
        <fullName evidence="1">Pyrimidine/purine nucleoside phosphorylase</fullName>
        <ecNumber evidence="1">2.4.2.1</ecNumber>
        <ecNumber evidence="1">2.4.2.2</ecNumber>
    </recommendedName>
    <alternativeName>
        <fullName evidence="1">Adenosine phosphorylase</fullName>
    </alternativeName>
    <alternativeName>
        <fullName evidence="1">Cytidine phosphorylase</fullName>
    </alternativeName>
    <alternativeName>
        <fullName evidence="1">Guanosine phosphorylase</fullName>
    </alternativeName>
    <alternativeName>
        <fullName evidence="1">Inosine phosphorylase</fullName>
    </alternativeName>
    <alternativeName>
        <fullName evidence="1">Thymidine phosphorylase</fullName>
    </alternativeName>
    <alternativeName>
        <fullName evidence="1">Uridine phosphorylase</fullName>
    </alternativeName>
    <alternativeName>
        <fullName evidence="1">Xanthosine phosphorylase</fullName>
    </alternativeName>
</protein>
<name>PPNP_SALNS</name>
<proteinExistence type="inferred from homology"/>
<reference key="1">
    <citation type="journal article" date="2011" name="J. Bacteriol.">
        <title>Comparative genomics of 28 Salmonella enterica isolates: evidence for CRISPR-mediated adaptive sublineage evolution.</title>
        <authorList>
            <person name="Fricke W.F."/>
            <person name="Mammel M.K."/>
            <person name="McDermott P.F."/>
            <person name="Tartera C."/>
            <person name="White D.G."/>
            <person name="Leclerc J.E."/>
            <person name="Ravel J."/>
            <person name="Cebula T.A."/>
        </authorList>
    </citation>
    <scope>NUCLEOTIDE SEQUENCE [LARGE SCALE GENOMIC DNA]</scope>
    <source>
        <strain>SL254</strain>
    </source>
</reference>
<accession>B4SW31</accession>
<gene>
    <name evidence="1" type="primary">ppnP</name>
    <name type="ordered locus">SNSL254_A0434</name>
</gene>
<sequence>MLQSNEYFSGKVKSIGFTSSSIGRASVGVMAEGEYTFGTAEPEEMTVVSGALKVLLPGTVEWKVYTAGEVFNVPGHSEFHLQVAEPTSYLCRYL</sequence>
<keyword id="KW-0328">Glycosyltransferase</keyword>
<keyword id="KW-0808">Transferase</keyword>
<organism>
    <name type="scientific">Salmonella newport (strain SL254)</name>
    <dbReference type="NCBI Taxonomy" id="423368"/>
    <lineage>
        <taxon>Bacteria</taxon>
        <taxon>Pseudomonadati</taxon>
        <taxon>Pseudomonadota</taxon>
        <taxon>Gammaproteobacteria</taxon>
        <taxon>Enterobacterales</taxon>
        <taxon>Enterobacteriaceae</taxon>
        <taxon>Salmonella</taxon>
    </lineage>
</organism>